<protein>
    <recommendedName>
        <fullName evidence="2">Large ribosomal subunit protein uL15</fullName>
    </recommendedName>
    <alternativeName>
        <fullName>60S ribosomal protein L27a</fullName>
    </alternativeName>
    <alternativeName>
        <fullName>L29</fullName>
    </alternativeName>
</protein>
<organism>
    <name type="scientific">Blumeria hordei</name>
    <name type="common">Barley powdery mildew</name>
    <name type="synonym">Blumeria graminis f. sp. hordei</name>
    <dbReference type="NCBI Taxonomy" id="2867405"/>
    <lineage>
        <taxon>Eukaryota</taxon>
        <taxon>Fungi</taxon>
        <taxon>Dikarya</taxon>
        <taxon>Ascomycota</taxon>
        <taxon>Pezizomycotina</taxon>
        <taxon>Leotiomycetes</taxon>
        <taxon>Erysiphales</taxon>
        <taxon>Erysiphaceae</taxon>
        <taxon>Blumeria</taxon>
    </lineage>
</organism>
<name>RL27A_BLUHO</name>
<proteinExistence type="evidence at transcript level"/>
<dbReference type="EMBL" id="Y11394">
    <property type="protein sequence ID" value="CAA72204.1"/>
    <property type="molecule type" value="mRNA"/>
</dbReference>
<dbReference type="SMR" id="P78987"/>
<dbReference type="EnsemblFungi" id="BLGH_05821-mRNA-1">
    <property type="protein sequence ID" value="BLGH_05821-mRNA-1"/>
    <property type="gene ID" value="BLGH_05821"/>
</dbReference>
<dbReference type="VEuPathDB" id="FungiDB:BLGHR1_14468"/>
<dbReference type="GO" id="GO:0022625">
    <property type="term" value="C:cytosolic large ribosomal subunit"/>
    <property type="evidence" value="ECO:0007669"/>
    <property type="project" value="EnsemblFungi"/>
</dbReference>
<dbReference type="GO" id="GO:0005634">
    <property type="term" value="C:nucleus"/>
    <property type="evidence" value="ECO:0007669"/>
    <property type="project" value="EnsemblFungi"/>
</dbReference>
<dbReference type="GO" id="GO:0003723">
    <property type="term" value="F:RNA binding"/>
    <property type="evidence" value="ECO:0007669"/>
    <property type="project" value="EnsemblFungi"/>
</dbReference>
<dbReference type="GO" id="GO:0003735">
    <property type="term" value="F:structural constituent of ribosome"/>
    <property type="evidence" value="ECO:0007669"/>
    <property type="project" value="InterPro"/>
</dbReference>
<dbReference type="GO" id="GO:0006412">
    <property type="term" value="P:translation"/>
    <property type="evidence" value="ECO:0007669"/>
    <property type="project" value="InterPro"/>
</dbReference>
<dbReference type="FunFam" id="3.100.10.10:FF:000002">
    <property type="entry name" value="60S ribosomal protein L27a"/>
    <property type="match status" value="1"/>
</dbReference>
<dbReference type="Gene3D" id="3.100.10.10">
    <property type="match status" value="1"/>
</dbReference>
<dbReference type="HAMAP" id="MF_01341">
    <property type="entry name" value="Ribosomal_uL15"/>
    <property type="match status" value="1"/>
</dbReference>
<dbReference type="InterPro" id="IPR030878">
    <property type="entry name" value="Ribosomal_uL15"/>
</dbReference>
<dbReference type="InterPro" id="IPR021131">
    <property type="entry name" value="Ribosomal_uL15/eL18"/>
</dbReference>
<dbReference type="InterPro" id="IPR036227">
    <property type="entry name" value="Ribosomal_uL15/eL18_sf"/>
</dbReference>
<dbReference type="InterPro" id="IPR001196">
    <property type="entry name" value="Ribosomal_uL15_CS"/>
</dbReference>
<dbReference type="PANTHER" id="PTHR11721">
    <property type="entry name" value="60S RIBOSOMAL PROTEIN L27A"/>
    <property type="match status" value="1"/>
</dbReference>
<dbReference type="PANTHER" id="PTHR11721:SF3">
    <property type="entry name" value="LARGE RIBOSOMAL SUBUNIT PROTEIN UL15"/>
    <property type="match status" value="1"/>
</dbReference>
<dbReference type="Pfam" id="PF00828">
    <property type="entry name" value="Ribosomal_L27A"/>
    <property type="match status" value="1"/>
</dbReference>
<dbReference type="SUPFAM" id="SSF52080">
    <property type="entry name" value="Ribosomal proteins L15p and L18e"/>
    <property type="match status" value="1"/>
</dbReference>
<dbReference type="PROSITE" id="PS00475">
    <property type="entry name" value="RIBOSOMAL_L15"/>
    <property type="match status" value="1"/>
</dbReference>
<accession>P78987</accession>
<feature type="chain" id="PRO_0000104899" description="Large ribosomal subunit protein uL15">
    <location>
        <begin position="1"/>
        <end position="149"/>
    </location>
</feature>
<feature type="region of interest" description="Disordered" evidence="1">
    <location>
        <begin position="1"/>
        <end position="42"/>
    </location>
</feature>
<feature type="compositionally biased region" description="Basic residues" evidence="1">
    <location>
        <begin position="1"/>
        <end position="14"/>
    </location>
</feature>
<feature type="compositionally biased region" description="Basic residues" evidence="1">
    <location>
        <begin position="21"/>
        <end position="30"/>
    </location>
</feature>
<comment type="similarity">
    <text evidence="2">Belongs to the universal ribosomal protein uL15 family.</text>
</comment>
<evidence type="ECO:0000256" key="1">
    <source>
        <dbReference type="SAM" id="MobiDB-lite"/>
    </source>
</evidence>
<evidence type="ECO:0000305" key="2"/>
<keyword id="KW-0687">Ribonucleoprotein</keyword>
<keyword id="KW-0689">Ribosomal protein</keyword>
<sequence>MPTHLSKTRKHRGHVSAGHGRVGKHRKHPGGRGLAGGQHHHRTNMDKYHPGYFGKVGMRYFHKQGNHFWKPVLNLEKLWSLIPAEKREAYLSSTNPDVIPVIDLLPLGYSKVLGKGRIPKVPLVVRARWFSKEAERKITEAGGVVELVA</sequence>
<reference key="1">
    <citation type="submission" date="1997-03" db="EMBL/GenBank/DDBJ databases">
        <title>Characterization of a cDNA encoding the ribosomal protein L29 of Erysiphe graminis f.sp. hordei.</title>
        <authorList>
            <person name="Justesen A.F."/>
            <person name="Christiansen S.K."/>
            <person name="Giese H."/>
        </authorList>
    </citation>
    <scope>NUCLEOTIDE SEQUENCE [MRNA]</scope>
    <source>
        <strain>CR3</strain>
    </source>
</reference>